<keyword id="KW-0067">ATP-binding</keyword>
<keyword id="KW-0342">GTP-binding</keyword>
<keyword id="KW-0547">Nucleotide-binding</keyword>
<keyword id="KW-1185">Reference proteome</keyword>
<name>Y3564_CLOK5</name>
<gene>
    <name type="ordered locus">CKL_3564</name>
</gene>
<organism>
    <name type="scientific">Clostridium kluyveri (strain ATCC 8527 / DSM 555 / NBRC 12016 / NCIMB 10680 / K1)</name>
    <dbReference type="NCBI Taxonomy" id="431943"/>
    <lineage>
        <taxon>Bacteria</taxon>
        <taxon>Bacillati</taxon>
        <taxon>Bacillota</taxon>
        <taxon>Clostridia</taxon>
        <taxon>Eubacteriales</taxon>
        <taxon>Clostridiaceae</taxon>
        <taxon>Clostridium</taxon>
    </lineage>
</organism>
<dbReference type="EMBL" id="CP000673">
    <property type="protein sequence ID" value="EDK35555.1"/>
    <property type="molecule type" value="Genomic_DNA"/>
</dbReference>
<dbReference type="SMR" id="A5N359"/>
<dbReference type="STRING" id="431943.CKL_3564"/>
<dbReference type="KEGG" id="ckl:CKL_3564"/>
<dbReference type="eggNOG" id="COG1660">
    <property type="taxonomic scope" value="Bacteria"/>
</dbReference>
<dbReference type="HOGENOM" id="CLU_059558_0_0_9"/>
<dbReference type="Proteomes" id="UP000002411">
    <property type="component" value="Chromosome"/>
</dbReference>
<dbReference type="GO" id="GO:0005524">
    <property type="term" value="F:ATP binding"/>
    <property type="evidence" value="ECO:0007669"/>
    <property type="project" value="UniProtKB-UniRule"/>
</dbReference>
<dbReference type="GO" id="GO:0005525">
    <property type="term" value="F:GTP binding"/>
    <property type="evidence" value="ECO:0007669"/>
    <property type="project" value="UniProtKB-UniRule"/>
</dbReference>
<dbReference type="Gene3D" id="3.40.50.300">
    <property type="entry name" value="P-loop containing nucleotide triphosphate hydrolases"/>
    <property type="match status" value="1"/>
</dbReference>
<dbReference type="HAMAP" id="MF_00636">
    <property type="entry name" value="RapZ_like"/>
    <property type="match status" value="1"/>
</dbReference>
<dbReference type="InterPro" id="IPR027417">
    <property type="entry name" value="P-loop_NTPase"/>
</dbReference>
<dbReference type="InterPro" id="IPR005337">
    <property type="entry name" value="RapZ-like"/>
</dbReference>
<dbReference type="InterPro" id="IPR053930">
    <property type="entry name" value="RapZ-like_N"/>
</dbReference>
<dbReference type="InterPro" id="IPR053931">
    <property type="entry name" value="RapZ_C"/>
</dbReference>
<dbReference type="NCBIfam" id="NF003828">
    <property type="entry name" value="PRK05416.1"/>
    <property type="match status" value="1"/>
</dbReference>
<dbReference type="PANTHER" id="PTHR30448">
    <property type="entry name" value="RNASE ADAPTER PROTEIN RAPZ"/>
    <property type="match status" value="1"/>
</dbReference>
<dbReference type="PANTHER" id="PTHR30448:SF0">
    <property type="entry name" value="RNASE ADAPTER PROTEIN RAPZ"/>
    <property type="match status" value="1"/>
</dbReference>
<dbReference type="Pfam" id="PF22740">
    <property type="entry name" value="PapZ_C"/>
    <property type="match status" value="1"/>
</dbReference>
<dbReference type="Pfam" id="PF03668">
    <property type="entry name" value="RapZ-like_N"/>
    <property type="match status" value="1"/>
</dbReference>
<dbReference type="PIRSF" id="PIRSF005052">
    <property type="entry name" value="P-loopkin"/>
    <property type="match status" value="1"/>
</dbReference>
<dbReference type="SUPFAM" id="SSF52540">
    <property type="entry name" value="P-loop containing nucleoside triphosphate hydrolases"/>
    <property type="match status" value="1"/>
</dbReference>
<reference key="1">
    <citation type="journal article" date="2008" name="Proc. Natl. Acad. Sci. U.S.A.">
        <title>The genome of Clostridium kluyveri, a strict anaerobe with unique metabolic features.</title>
        <authorList>
            <person name="Seedorf H."/>
            <person name="Fricke W.F."/>
            <person name="Veith B."/>
            <person name="Brueggemann H."/>
            <person name="Liesegang H."/>
            <person name="Strittmatter A."/>
            <person name="Miethke M."/>
            <person name="Buckel W."/>
            <person name="Hinderberger J."/>
            <person name="Li F."/>
            <person name="Hagemeier C."/>
            <person name="Thauer R.K."/>
            <person name="Gottschalk G."/>
        </authorList>
    </citation>
    <scope>NUCLEOTIDE SEQUENCE [LARGE SCALE GENOMIC DNA]</scope>
    <source>
        <strain>ATCC 8527 / DSM 555 / NBRC 12016 / NCIMB 10680 / K1</strain>
    </source>
</reference>
<proteinExistence type="inferred from homology"/>
<evidence type="ECO:0000255" key="1">
    <source>
        <dbReference type="HAMAP-Rule" id="MF_00636"/>
    </source>
</evidence>
<accession>A5N359</accession>
<comment type="function">
    <text evidence="1">Displays ATPase and GTPase activities.</text>
</comment>
<comment type="similarity">
    <text evidence="1">Belongs to the RapZ-like family.</text>
</comment>
<protein>
    <recommendedName>
        <fullName evidence="1">Nucleotide-binding protein CKL_3564</fullName>
    </recommendedName>
</protein>
<feature type="chain" id="PRO_1000082657" description="Nucleotide-binding protein CKL_3564">
    <location>
        <begin position="1"/>
        <end position="293"/>
    </location>
</feature>
<feature type="binding site" evidence="1">
    <location>
        <begin position="8"/>
        <end position="15"/>
    </location>
    <ligand>
        <name>ATP</name>
        <dbReference type="ChEBI" id="CHEBI:30616"/>
    </ligand>
</feature>
<feature type="binding site" evidence="1">
    <location>
        <begin position="59"/>
        <end position="62"/>
    </location>
    <ligand>
        <name>GTP</name>
        <dbReference type="ChEBI" id="CHEBI:37565"/>
    </ligand>
</feature>
<sequence>MRFVIVTGLSGAGKTQAIRNLEDLGFFCVDNLPPTLIPKFAEACYQTDGKIDKIALVIDIRGGQFFDDIFESLNYLQKQGYKYEILFLDASDEVLIKRFKESRRKHPLAPDGRILNGILMERSRLREIKDRSDNIIDTSKLATRELREEITRIYSEEGQMETQLIVTVLSFGFKYGIPVDSDLVFDVRFLPNPFYIPELKNHSGRDKIVVDYIMDFKETVKFIDKLEDMLEFLIPNYLKEGKRQLIVSIGCTGGRHRSVTIANTIYNRLKDNGHRVNIDHRDIEEDIKGGKKL</sequence>